<name>AROA_EDWI9</name>
<feature type="chain" id="PRO_0000088256" description="3-phosphoshikimate 1-carboxyvinyltransferase">
    <location>
        <begin position="1"/>
        <end position="428"/>
    </location>
</feature>
<feature type="active site" description="Proton acceptor" evidence="1">
    <location>
        <position position="314"/>
    </location>
</feature>
<feature type="binding site" evidence="1">
    <location>
        <position position="23"/>
    </location>
    <ligand>
        <name>3-phosphoshikimate</name>
        <dbReference type="ChEBI" id="CHEBI:145989"/>
    </ligand>
</feature>
<feature type="binding site" evidence="1">
    <location>
        <position position="23"/>
    </location>
    <ligand>
        <name>phosphoenolpyruvate</name>
        <dbReference type="ChEBI" id="CHEBI:58702"/>
    </ligand>
</feature>
<feature type="binding site" evidence="1">
    <location>
        <position position="24"/>
    </location>
    <ligand>
        <name>3-phosphoshikimate</name>
        <dbReference type="ChEBI" id="CHEBI:145989"/>
    </ligand>
</feature>
<feature type="binding site" evidence="1">
    <location>
        <position position="28"/>
    </location>
    <ligand>
        <name>3-phosphoshikimate</name>
        <dbReference type="ChEBI" id="CHEBI:145989"/>
    </ligand>
</feature>
<feature type="binding site" evidence="1">
    <location>
        <position position="97"/>
    </location>
    <ligand>
        <name>phosphoenolpyruvate</name>
        <dbReference type="ChEBI" id="CHEBI:58702"/>
    </ligand>
</feature>
<feature type="binding site" evidence="1">
    <location>
        <position position="125"/>
    </location>
    <ligand>
        <name>phosphoenolpyruvate</name>
        <dbReference type="ChEBI" id="CHEBI:58702"/>
    </ligand>
</feature>
<feature type="binding site" evidence="1">
    <location>
        <position position="170"/>
    </location>
    <ligand>
        <name>3-phosphoshikimate</name>
        <dbReference type="ChEBI" id="CHEBI:145989"/>
    </ligand>
</feature>
<feature type="binding site" evidence="1">
    <location>
        <position position="171"/>
    </location>
    <ligand>
        <name>3-phosphoshikimate</name>
        <dbReference type="ChEBI" id="CHEBI:145989"/>
    </ligand>
</feature>
<feature type="binding site" evidence="1">
    <location>
        <position position="172"/>
    </location>
    <ligand>
        <name>3-phosphoshikimate</name>
        <dbReference type="ChEBI" id="CHEBI:145989"/>
    </ligand>
</feature>
<feature type="binding site" evidence="1">
    <location>
        <position position="172"/>
    </location>
    <ligand>
        <name>phosphoenolpyruvate</name>
        <dbReference type="ChEBI" id="CHEBI:58702"/>
    </ligand>
</feature>
<feature type="binding site" evidence="1">
    <location>
        <position position="198"/>
    </location>
    <ligand>
        <name>3-phosphoshikimate</name>
        <dbReference type="ChEBI" id="CHEBI:145989"/>
    </ligand>
</feature>
<feature type="binding site" evidence="1">
    <location>
        <position position="314"/>
    </location>
    <ligand>
        <name>3-phosphoshikimate</name>
        <dbReference type="ChEBI" id="CHEBI:145989"/>
    </ligand>
</feature>
<feature type="binding site" evidence="1">
    <location>
        <position position="337"/>
    </location>
    <ligand>
        <name>3-phosphoshikimate</name>
        <dbReference type="ChEBI" id="CHEBI:145989"/>
    </ligand>
</feature>
<feature type="binding site" evidence="1">
    <location>
        <position position="341"/>
    </location>
    <ligand>
        <name>3-phosphoshikimate</name>
        <dbReference type="ChEBI" id="CHEBI:145989"/>
    </ligand>
</feature>
<feature type="binding site" evidence="1">
    <location>
        <position position="345"/>
    </location>
    <ligand>
        <name>phosphoenolpyruvate</name>
        <dbReference type="ChEBI" id="CHEBI:58702"/>
    </ligand>
</feature>
<feature type="binding site" evidence="1">
    <location>
        <position position="387"/>
    </location>
    <ligand>
        <name>phosphoenolpyruvate</name>
        <dbReference type="ChEBI" id="CHEBI:58702"/>
    </ligand>
</feature>
<feature type="binding site" evidence="1">
    <location>
        <position position="412"/>
    </location>
    <ligand>
        <name>phosphoenolpyruvate</name>
        <dbReference type="ChEBI" id="CHEBI:58702"/>
    </ligand>
</feature>
<evidence type="ECO:0000255" key="1">
    <source>
        <dbReference type="HAMAP-Rule" id="MF_00210"/>
    </source>
</evidence>
<evidence type="ECO:0000305" key="2"/>
<accession>Q9X4H2</accession>
<accession>C5BBS2</accession>
<proteinExistence type="inferred from homology"/>
<protein>
    <recommendedName>
        <fullName evidence="1">3-phosphoshikimate 1-carboxyvinyltransferase</fullName>
        <ecNumber evidence="1">2.5.1.19</ecNumber>
    </recommendedName>
    <alternativeName>
        <fullName evidence="1">5-enolpyruvylshikimate-3-phosphate synthase</fullName>
        <shortName evidence="1">EPSP synthase</shortName>
        <shortName evidence="1">EPSPS</shortName>
    </alternativeName>
</protein>
<organism>
    <name type="scientific">Edwardsiella ictaluri (strain 93-146)</name>
    <dbReference type="NCBI Taxonomy" id="634503"/>
    <lineage>
        <taxon>Bacteria</taxon>
        <taxon>Pseudomonadati</taxon>
        <taxon>Pseudomonadota</taxon>
        <taxon>Gammaproteobacteria</taxon>
        <taxon>Enterobacterales</taxon>
        <taxon>Hafniaceae</taxon>
        <taxon>Edwardsiella</taxon>
    </lineage>
</organism>
<dbReference type="EC" id="2.5.1.19" evidence="1"/>
<dbReference type="EMBL" id="AF110153">
    <property type="protein sequence ID" value="AAD28375.1"/>
    <property type="molecule type" value="Genomic_DNA"/>
</dbReference>
<dbReference type="EMBL" id="CP001600">
    <property type="protein sequence ID" value="ACR69627.1"/>
    <property type="molecule type" value="Genomic_DNA"/>
</dbReference>
<dbReference type="RefSeq" id="WP_015871741.1">
    <property type="nucleotide sequence ID" value="NZ_CP169062.1"/>
</dbReference>
<dbReference type="SMR" id="Q9X4H2"/>
<dbReference type="STRING" id="67780.B6E78_04425"/>
<dbReference type="GeneID" id="69539375"/>
<dbReference type="KEGG" id="eic:NT01EI_2457"/>
<dbReference type="PATRIC" id="fig|634503.3.peg.2180"/>
<dbReference type="HOGENOM" id="CLU_024321_0_0_6"/>
<dbReference type="OrthoDB" id="9809920at2"/>
<dbReference type="UniPathway" id="UPA00053">
    <property type="reaction ID" value="UER00089"/>
</dbReference>
<dbReference type="Proteomes" id="UP000001485">
    <property type="component" value="Chromosome"/>
</dbReference>
<dbReference type="GO" id="GO:0005737">
    <property type="term" value="C:cytoplasm"/>
    <property type="evidence" value="ECO:0007669"/>
    <property type="project" value="UniProtKB-SubCell"/>
</dbReference>
<dbReference type="GO" id="GO:0003866">
    <property type="term" value="F:3-phosphoshikimate 1-carboxyvinyltransferase activity"/>
    <property type="evidence" value="ECO:0007669"/>
    <property type="project" value="UniProtKB-UniRule"/>
</dbReference>
<dbReference type="GO" id="GO:0008652">
    <property type="term" value="P:amino acid biosynthetic process"/>
    <property type="evidence" value="ECO:0007669"/>
    <property type="project" value="UniProtKB-KW"/>
</dbReference>
<dbReference type="GO" id="GO:0009073">
    <property type="term" value="P:aromatic amino acid family biosynthetic process"/>
    <property type="evidence" value="ECO:0007669"/>
    <property type="project" value="UniProtKB-KW"/>
</dbReference>
<dbReference type="GO" id="GO:0009423">
    <property type="term" value="P:chorismate biosynthetic process"/>
    <property type="evidence" value="ECO:0007669"/>
    <property type="project" value="UniProtKB-UniRule"/>
</dbReference>
<dbReference type="CDD" id="cd01556">
    <property type="entry name" value="EPSP_synthase"/>
    <property type="match status" value="1"/>
</dbReference>
<dbReference type="FunFam" id="3.65.10.10:FF:000003">
    <property type="entry name" value="3-phosphoshikimate 1-carboxyvinyltransferase"/>
    <property type="match status" value="1"/>
</dbReference>
<dbReference type="FunFam" id="3.65.10.10:FF:000004">
    <property type="entry name" value="3-phosphoshikimate 1-carboxyvinyltransferase"/>
    <property type="match status" value="1"/>
</dbReference>
<dbReference type="Gene3D" id="3.65.10.10">
    <property type="entry name" value="Enolpyruvate transferase domain"/>
    <property type="match status" value="2"/>
</dbReference>
<dbReference type="HAMAP" id="MF_00210">
    <property type="entry name" value="EPSP_synth"/>
    <property type="match status" value="1"/>
</dbReference>
<dbReference type="InterPro" id="IPR001986">
    <property type="entry name" value="Enolpyruvate_Tfrase_dom"/>
</dbReference>
<dbReference type="InterPro" id="IPR036968">
    <property type="entry name" value="Enolpyruvate_Tfrase_sf"/>
</dbReference>
<dbReference type="InterPro" id="IPR006264">
    <property type="entry name" value="EPSP_synthase"/>
</dbReference>
<dbReference type="InterPro" id="IPR023193">
    <property type="entry name" value="EPSP_synthase_CS"/>
</dbReference>
<dbReference type="InterPro" id="IPR013792">
    <property type="entry name" value="RNA3'P_cycl/enolpyr_Trfase_a/b"/>
</dbReference>
<dbReference type="NCBIfam" id="TIGR01356">
    <property type="entry name" value="aroA"/>
    <property type="match status" value="1"/>
</dbReference>
<dbReference type="PANTHER" id="PTHR21090">
    <property type="entry name" value="AROM/DEHYDROQUINATE SYNTHASE"/>
    <property type="match status" value="1"/>
</dbReference>
<dbReference type="PANTHER" id="PTHR21090:SF5">
    <property type="entry name" value="PENTAFUNCTIONAL AROM POLYPEPTIDE"/>
    <property type="match status" value="1"/>
</dbReference>
<dbReference type="Pfam" id="PF00275">
    <property type="entry name" value="EPSP_synthase"/>
    <property type="match status" value="1"/>
</dbReference>
<dbReference type="PIRSF" id="PIRSF000505">
    <property type="entry name" value="EPSPS"/>
    <property type="match status" value="1"/>
</dbReference>
<dbReference type="SUPFAM" id="SSF55205">
    <property type="entry name" value="EPT/RTPC-like"/>
    <property type="match status" value="1"/>
</dbReference>
<dbReference type="PROSITE" id="PS00104">
    <property type="entry name" value="EPSP_SYNTHASE_1"/>
    <property type="match status" value="1"/>
</dbReference>
<dbReference type="PROSITE" id="PS00885">
    <property type="entry name" value="EPSP_SYNTHASE_2"/>
    <property type="match status" value="1"/>
</dbReference>
<keyword id="KW-0028">Amino-acid biosynthesis</keyword>
<keyword id="KW-0057">Aromatic amino acid biosynthesis</keyword>
<keyword id="KW-0963">Cytoplasm</keyword>
<keyword id="KW-0808">Transferase</keyword>
<gene>
    <name evidence="1" type="primary">aroA</name>
    <name type="ordered locus">NT01EI_2457</name>
</gene>
<comment type="function">
    <text evidence="1">Catalyzes the transfer of the enolpyruvyl moiety of phosphoenolpyruvate (PEP) to the 5-hydroxyl of shikimate-3-phosphate (S3P) to produce enolpyruvyl shikimate-3-phosphate and inorganic phosphate.</text>
</comment>
<comment type="catalytic activity">
    <reaction evidence="1">
        <text>3-phosphoshikimate + phosphoenolpyruvate = 5-O-(1-carboxyvinyl)-3-phosphoshikimate + phosphate</text>
        <dbReference type="Rhea" id="RHEA:21256"/>
        <dbReference type="ChEBI" id="CHEBI:43474"/>
        <dbReference type="ChEBI" id="CHEBI:57701"/>
        <dbReference type="ChEBI" id="CHEBI:58702"/>
        <dbReference type="ChEBI" id="CHEBI:145989"/>
        <dbReference type="EC" id="2.5.1.19"/>
    </reaction>
    <physiologicalReaction direction="left-to-right" evidence="1">
        <dbReference type="Rhea" id="RHEA:21257"/>
    </physiologicalReaction>
</comment>
<comment type="pathway">
    <text evidence="1">Metabolic intermediate biosynthesis; chorismate biosynthesis; chorismate from D-erythrose 4-phosphate and phosphoenolpyruvate: step 6/7.</text>
</comment>
<comment type="subunit">
    <text evidence="1">Monomer.</text>
</comment>
<comment type="subcellular location">
    <subcellularLocation>
        <location evidence="1">Cytoplasm</location>
    </subcellularLocation>
</comment>
<comment type="similarity">
    <text evidence="1 2">Belongs to the EPSP synthase family.</text>
</comment>
<sequence>MSSALTLQPVRRFSGEINLPGSKSVSNRALLLAAQARGVTRLHNLLDSDDVRYMLDALKALGVRYQLSDCRTRCEVQGLGGTLSAHGALTLFLGNAGTAMRPLAAALSLGLRDVILTGEPRMKERPIAHLVTALRQGGAQVDYLESDGYPPVRLHGGFNGGEISVDGSVSSQFLTALLMAAPMAAEETRITILGELVSKPYIAITLAMMRAFGVEVENHAYRHFVVRGGQVYQAPSDYLVEGDASSASYFLAGAAIAGGTVRVTGIGRHSMQGDIHFADVLEKMGAQVEWGNDYIACTRDSLHGIDMDMNAIPDAAMTIATTALFAKGPTTLRNIYNWRVKETDRLAAMASELRKVGAVVEEGTDFLRIEPPAQLQAAQIATYNDHRMAMCFSLVALSGTPVTICDPGCTAKTFPDYFRQFSALCHPR</sequence>
<reference key="1">
    <citation type="submission" date="1998-11" db="EMBL/GenBank/DDBJ databases">
        <title>An aroA mutant of Edwardsiella ictaluri is safe and efficacious as a live, attenuated vaccine.</title>
        <authorList>
            <person name="Thune R.L."/>
            <person name="Fernandez D.H."/>
            <person name="Battista J.R."/>
        </authorList>
    </citation>
    <scope>NUCLEOTIDE SEQUENCE [GENOMIC DNA]</scope>
</reference>
<reference key="2">
    <citation type="submission" date="2009-03" db="EMBL/GenBank/DDBJ databases">
        <title>Complete genome sequence of Edwardsiella ictaluri 93-146.</title>
        <authorList>
            <person name="Williams M.L."/>
            <person name="Gillaspy A.F."/>
            <person name="Dyer D.W."/>
            <person name="Thune R.L."/>
            <person name="Waldbieser G.C."/>
            <person name="Schuster S.C."/>
            <person name="Gipson J."/>
            <person name="Zaitshik J."/>
            <person name="Landry C."/>
            <person name="Lawrence M.L."/>
        </authorList>
    </citation>
    <scope>NUCLEOTIDE SEQUENCE [LARGE SCALE GENOMIC DNA]</scope>
    <source>
        <strain>93-146</strain>
    </source>
</reference>